<comment type="function">
    <text evidence="1">An accessory protein needed during the final step in the assembly of 30S ribosomal subunit, possibly for assembly of the head region. Essential for efficient processing of 16S rRNA. May be needed both before and after RbfA during the maturation of 16S rRNA. It has affinity for free ribosomal 30S subunits but not for 70S ribosomes.</text>
</comment>
<comment type="subunit">
    <text evidence="1">Binds ribosomal protein uS19.</text>
</comment>
<comment type="subcellular location">
    <subcellularLocation>
        <location evidence="1">Cytoplasm</location>
    </subcellularLocation>
</comment>
<comment type="domain">
    <text evidence="1">The PRC barrel domain binds ribosomal protein uS19.</text>
</comment>
<comment type="similarity">
    <text evidence="1">Belongs to the RimM family.</text>
</comment>
<evidence type="ECO:0000255" key="1">
    <source>
        <dbReference type="HAMAP-Rule" id="MF_00014"/>
    </source>
</evidence>
<protein>
    <recommendedName>
        <fullName evidence="1">Ribosome maturation factor RimM</fullName>
    </recommendedName>
</protein>
<gene>
    <name evidence="1" type="primary">rimM</name>
    <name type="ordered locus">NMB0591</name>
</gene>
<name>RIMM_NEIMB</name>
<sequence>MTDTQNRVAMGYIKGVFGIKGWLKIAANTEYSDSLLDYPEWHLVKDGKTISVTLEAGKVVNGELQVKFEGINDRDLAFSLRGYTIEIPREAFAPTEEDEYYWTDLVGMTVVNKDHTVLGKVSNLMETGANDVLMIDGEHGQILIPFVSQYIETVDTGSKTITADWGLDY</sequence>
<organism>
    <name type="scientific">Neisseria meningitidis serogroup B (strain ATCC BAA-335 / MC58)</name>
    <dbReference type="NCBI Taxonomy" id="122586"/>
    <lineage>
        <taxon>Bacteria</taxon>
        <taxon>Pseudomonadati</taxon>
        <taxon>Pseudomonadota</taxon>
        <taxon>Betaproteobacteria</taxon>
        <taxon>Neisseriales</taxon>
        <taxon>Neisseriaceae</taxon>
        <taxon>Neisseria</taxon>
    </lineage>
</organism>
<accession>Q9K0K3</accession>
<dbReference type="EMBL" id="AE002098">
    <property type="protein sequence ID" value="AAF41019.1"/>
    <property type="molecule type" value="Genomic_DNA"/>
</dbReference>
<dbReference type="PIR" id="D81180">
    <property type="entry name" value="D81180"/>
</dbReference>
<dbReference type="RefSeq" id="NP_273635.1">
    <property type="nucleotide sequence ID" value="NC_003112.2"/>
</dbReference>
<dbReference type="RefSeq" id="WP_002214316.1">
    <property type="nucleotide sequence ID" value="NC_003112.2"/>
</dbReference>
<dbReference type="SMR" id="Q9K0K3"/>
<dbReference type="FunCoup" id="Q9K0K3">
    <property type="interactions" value="409"/>
</dbReference>
<dbReference type="STRING" id="122586.NMB0591"/>
<dbReference type="PaxDb" id="122586-NMB0591"/>
<dbReference type="KEGG" id="nme:NMB0591"/>
<dbReference type="PATRIC" id="fig|122586.8.peg.753"/>
<dbReference type="HOGENOM" id="CLU_077636_1_0_4"/>
<dbReference type="InParanoid" id="Q9K0K3"/>
<dbReference type="OrthoDB" id="9783509at2"/>
<dbReference type="Proteomes" id="UP000000425">
    <property type="component" value="Chromosome"/>
</dbReference>
<dbReference type="GO" id="GO:0005829">
    <property type="term" value="C:cytosol"/>
    <property type="evidence" value="ECO:0000318"/>
    <property type="project" value="GO_Central"/>
</dbReference>
<dbReference type="GO" id="GO:0005840">
    <property type="term" value="C:ribosome"/>
    <property type="evidence" value="ECO:0007669"/>
    <property type="project" value="InterPro"/>
</dbReference>
<dbReference type="GO" id="GO:0043022">
    <property type="term" value="F:ribosome binding"/>
    <property type="evidence" value="ECO:0007669"/>
    <property type="project" value="InterPro"/>
</dbReference>
<dbReference type="GO" id="GO:0030490">
    <property type="term" value="P:maturation of SSU-rRNA"/>
    <property type="evidence" value="ECO:0000318"/>
    <property type="project" value="GO_Central"/>
</dbReference>
<dbReference type="Gene3D" id="2.30.30.240">
    <property type="entry name" value="PRC-barrel domain"/>
    <property type="match status" value="1"/>
</dbReference>
<dbReference type="Gene3D" id="2.40.30.60">
    <property type="entry name" value="RimM"/>
    <property type="match status" value="1"/>
</dbReference>
<dbReference type="HAMAP" id="MF_00014">
    <property type="entry name" value="Ribosome_mat_RimM"/>
    <property type="match status" value="1"/>
</dbReference>
<dbReference type="InterPro" id="IPR011033">
    <property type="entry name" value="PRC_barrel-like_sf"/>
</dbReference>
<dbReference type="InterPro" id="IPR056792">
    <property type="entry name" value="PRC_RimM"/>
</dbReference>
<dbReference type="InterPro" id="IPR011961">
    <property type="entry name" value="RimM"/>
</dbReference>
<dbReference type="InterPro" id="IPR002676">
    <property type="entry name" value="RimM_N"/>
</dbReference>
<dbReference type="InterPro" id="IPR036976">
    <property type="entry name" value="RimM_N_sf"/>
</dbReference>
<dbReference type="InterPro" id="IPR009000">
    <property type="entry name" value="Transl_B-barrel_sf"/>
</dbReference>
<dbReference type="NCBIfam" id="TIGR02273">
    <property type="entry name" value="16S_RimM"/>
    <property type="match status" value="1"/>
</dbReference>
<dbReference type="PANTHER" id="PTHR33692">
    <property type="entry name" value="RIBOSOME MATURATION FACTOR RIMM"/>
    <property type="match status" value="1"/>
</dbReference>
<dbReference type="PANTHER" id="PTHR33692:SF1">
    <property type="entry name" value="RIBOSOME MATURATION FACTOR RIMM"/>
    <property type="match status" value="1"/>
</dbReference>
<dbReference type="Pfam" id="PF24986">
    <property type="entry name" value="PRC_RimM"/>
    <property type="match status" value="1"/>
</dbReference>
<dbReference type="Pfam" id="PF01782">
    <property type="entry name" value="RimM"/>
    <property type="match status" value="1"/>
</dbReference>
<dbReference type="SUPFAM" id="SSF50346">
    <property type="entry name" value="PRC-barrel domain"/>
    <property type="match status" value="1"/>
</dbReference>
<dbReference type="SUPFAM" id="SSF50447">
    <property type="entry name" value="Translation proteins"/>
    <property type="match status" value="1"/>
</dbReference>
<proteinExistence type="inferred from homology"/>
<reference key="1">
    <citation type="journal article" date="2000" name="Science">
        <title>Complete genome sequence of Neisseria meningitidis serogroup B strain MC58.</title>
        <authorList>
            <person name="Tettelin H."/>
            <person name="Saunders N.J."/>
            <person name="Heidelberg J.F."/>
            <person name="Jeffries A.C."/>
            <person name="Nelson K.E."/>
            <person name="Eisen J.A."/>
            <person name="Ketchum K.A."/>
            <person name="Hood D.W."/>
            <person name="Peden J.F."/>
            <person name="Dodson R.J."/>
            <person name="Nelson W.C."/>
            <person name="Gwinn M.L."/>
            <person name="DeBoy R.T."/>
            <person name="Peterson J.D."/>
            <person name="Hickey E.K."/>
            <person name="Haft D.H."/>
            <person name="Salzberg S.L."/>
            <person name="White O."/>
            <person name="Fleischmann R.D."/>
            <person name="Dougherty B.A."/>
            <person name="Mason T.M."/>
            <person name="Ciecko A."/>
            <person name="Parksey D.S."/>
            <person name="Blair E."/>
            <person name="Cittone H."/>
            <person name="Clark E.B."/>
            <person name="Cotton M.D."/>
            <person name="Utterback T.R."/>
            <person name="Khouri H.M."/>
            <person name="Qin H."/>
            <person name="Vamathevan J.J."/>
            <person name="Gill J."/>
            <person name="Scarlato V."/>
            <person name="Masignani V."/>
            <person name="Pizza M."/>
            <person name="Grandi G."/>
            <person name="Sun L."/>
            <person name="Smith H.O."/>
            <person name="Fraser C.M."/>
            <person name="Moxon E.R."/>
            <person name="Rappuoli R."/>
            <person name="Venter J.C."/>
        </authorList>
    </citation>
    <scope>NUCLEOTIDE SEQUENCE [LARGE SCALE GENOMIC DNA]</scope>
    <source>
        <strain>ATCC BAA-335 / MC58</strain>
    </source>
</reference>
<keyword id="KW-0143">Chaperone</keyword>
<keyword id="KW-0963">Cytoplasm</keyword>
<keyword id="KW-1185">Reference proteome</keyword>
<keyword id="KW-0690">Ribosome biogenesis</keyword>
<keyword id="KW-0698">rRNA processing</keyword>
<feature type="chain" id="PRO_0000163323" description="Ribosome maturation factor RimM">
    <location>
        <begin position="1"/>
        <end position="169"/>
    </location>
</feature>
<feature type="domain" description="PRC barrel" evidence="1">
    <location>
        <begin position="97"/>
        <end position="169"/>
    </location>
</feature>